<feature type="chain" id="PRO_1000141106" description="Small ribosomal subunit protein uS11">
    <location>
        <begin position="1"/>
        <end position="134"/>
    </location>
</feature>
<proteinExistence type="inferred from homology"/>
<reference key="1">
    <citation type="submission" date="2008-03" db="EMBL/GenBank/DDBJ databases">
        <title>Complete sequence of Leptothrix cholodnii SP-6.</title>
        <authorList>
            <consortium name="US DOE Joint Genome Institute"/>
            <person name="Copeland A."/>
            <person name="Lucas S."/>
            <person name="Lapidus A."/>
            <person name="Glavina del Rio T."/>
            <person name="Dalin E."/>
            <person name="Tice H."/>
            <person name="Bruce D."/>
            <person name="Goodwin L."/>
            <person name="Pitluck S."/>
            <person name="Chertkov O."/>
            <person name="Brettin T."/>
            <person name="Detter J.C."/>
            <person name="Han C."/>
            <person name="Kuske C.R."/>
            <person name="Schmutz J."/>
            <person name="Larimer F."/>
            <person name="Land M."/>
            <person name="Hauser L."/>
            <person name="Kyrpides N."/>
            <person name="Lykidis A."/>
            <person name="Emerson D."/>
            <person name="Richardson P."/>
        </authorList>
    </citation>
    <scope>NUCLEOTIDE SEQUENCE [LARGE SCALE GENOMIC DNA]</scope>
    <source>
        <strain>ATCC 51168 / LMG 8142 / SP-6</strain>
    </source>
</reference>
<accession>B1Y8B3</accession>
<gene>
    <name evidence="1" type="primary">rpsK</name>
    <name type="ordered locus">Lcho_3925</name>
</gene>
<sequence length="134" mass="14130">MAKAPVNNAARRVSKKVRKNIADGVAHVHASFNNTIITITDRQGNALSWASSGGQGFKGSRKSTPFAAQVAAEVAGRAAQEQGIKNLDVKIKGPGPGRESSVRALASLGIRIASISDVTPVPHNGCRPQKRRRI</sequence>
<organism>
    <name type="scientific">Leptothrix cholodnii (strain ATCC 51168 / LMG 8142 / SP-6)</name>
    <name type="common">Leptothrix discophora (strain SP-6)</name>
    <dbReference type="NCBI Taxonomy" id="395495"/>
    <lineage>
        <taxon>Bacteria</taxon>
        <taxon>Pseudomonadati</taxon>
        <taxon>Pseudomonadota</taxon>
        <taxon>Betaproteobacteria</taxon>
        <taxon>Burkholderiales</taxon>
        <taxon>Sphaerotilaceae</taxon>
        <taxon>Leptothrix</taxon>
    </lineage>
</organism>
<keyword id="KW-1185">Reference proteome</keyword>
<keyword id="KW-0687">Ribonucleoprotein</keyword>
<keyword id="KW-0689">Ribosomal protein</keyword>
<keyword id="KW-0694">RNA-binding</keyword>
<keyword id="KW-0699">rRNA-binding</keyword>
<evidence type="ECO:0000255" key="1">
    <source>
        <dbReference type="HAMAP-Rule" id="MF_01310"/>
    </source>
</evidence>
<evidence type="ECO:0000305" key="2"/>
<dbReference type="EMBL" id="CP001013">
    <property type="protein sequence ID" value="ACB36179.1"/>
    <property type="molecule type" value="Genomic_DNA"/>
</dbReference>
<dbReference type="RefSeq" id="WP_012348925.1">
    <property type="nucleotide sequence ID" value="NC_010524.1"/>
</dbReference>
<dbReference type="SMR" id="B1Y8B3"/>
<dbReference type="STRING" id="395495.Lcho_3925"/>
<dbReference type="KEGG" id="lch:Lcho_3925"/>
<dbReference type="eggNOG" id="COG0100">
    <property type="taxonomic scope" value="Bacteria"/>
</dbReference>
<dbReference type="HOGENOM" id="CLU_072439_5_0_4"/>
<dbReference type="OrthoDB" id="9806415at2"/>
<dbReference type="Proteomes" id="UP000001693">
    <property type="component" value="Chromosome"/>
</dbReference>
<dbReference type="GO" id="GO:1990904">
    <property type="term" value="C:ribonucleoprotein complex"/>
    <property type="evidence" value="ECO:0007669"/>
    <property type="project" value="UniProtKB-KW"/>
</dbReference>
<dbReference type="GO" id="GO:0005840">
    <property type="term" value="C:ribosome"/>
    <property type="evidence" value="ECO:0007669"/>
    <property type="project" value="UniProtKB-KW"/>
</dbReference>
<dbReference type="GO" id="GO:0019843">
    <property type="term" value="F:rRNA binding"/>
    <property type="evidence" value="ECO:0007669"/>
    <property type="project" value="UniProtKB-UniRule"/>
</dbReference>
<dbReference type="GO" id="GO:0003735">
    <property type="term" value="F:structural constituent of ribosome"/>
    <property type="evidence" value="ECO:0007669"/>
    <property type="project" value="InterPro"/>
</dbReference>
<dbReference type="GO" id="GO:0006412">
    <property type="term" value="P:translation"/>
    <property type="evidence" value="ECO:0007669"/>
    <property type="project" value="UniProtKB-UniRule"/>
</dbReference>
<dbReference type="FunFam" id="3.30.420.80:FF:000001">
    <property type="entry name" value="30S ribosomal protein S11"/>
    <property type="match status" value="1"/>
</dbReference>
<dbReference type="Gene3D" id="3.30.420.80">
    <property type="entry name" value="Ribosomal protein S11"/>
    <property type="match status" value="1"/>
</dbReference>
<dbReference type="HAMAP" id="MF_01310">
    <property type="entry name" value="Ribosomal_uS11"/>
    <property type="match status" value="1"/>
</dbReference>
<dbReference type="InterPro" id="IPR001971">
    <property type="entry name" value="Ribosomal_uS11"/>
</dbReference>
<dbReference type="InterPro" id="IPR019981">
    <property type="entry name" value="Ribosomal_uS11_bac-type"/>
</dbReference>
<dbReference type="InterPro" id="IPR018102">
    <property type="entry name" value="Ribosomal_uS11_CS"/>
</dbReference>
<dbReference type="InterPro" id="IPR036967">
    <property type="entry name" value="Ribosomal_uS11_sf"/>
</dbReference>
<dbReference type="NCBIfam" id="NF003698">
    <property type="entry name" value="PRK05309.1"/>
    <property type="match status" value="1"/>
</dbReference>
<dbReference type="NCBIfam" id="TIGR03632">
    <property type="entry name" value="uS11_bact"/>
    <property type="match status" value="1"/>
</dbReference>
<dbReference type="PANTHER" id="PTHR11759">
    <property type="entry name" value="40S RIBOSOMAL PROTEIN S14/30S RIBOSOMAL PROTEIN S11"/>
    <property type="match status" value="1"/>
</dbReference>
<dbReference type="Pfam" id="PF00411">
    <property type="entry name" value="Ribosomal_S11"/>
    <property type="match status" value="1"/>
</dbReference>
<dbReference type="PIRSF" id="PIRSF002131">
    <property type="entry name" value="Ribosomal_S11"/>
    <property type="match status" value="1"/>
</dbReference>
<dbReference type="SUPFAM" id="SSF53137">
    <property type="entry name" value="Translational machinery components"/>
    <property type="match status" value="1"/>
</dbReference>
<dbReference type="PROSITE" id="PS00054">
    <property type="entry name" value="RIBOSOMAL_S11"/>
    <property type="match status" value="1"/>
</dbReference>
<comment type="function">
    <text evidence="1">Located on the platform of the 30S subunit, it bridges several disparate RNA helices of the 16S rRNA. Forms part of the Shine-Dalgarno cleft in the 70S ribosome.</text>
</comment>
<comment type="subunit">
    <text evidence="1">Part of the 30S ribosomal subunit. Interacts with proteins S7 and S18. Binds to IF-3.</text>
</comment>
<comment type="similarity">
    <text evidence="1">Belongs to the universal ribosomal protein uS11 family.</text>
</comment>
<protein>
    <recommendedName>
        <fullName evidence="1">Small ribosomal subunit protein uS11</fullName>
    </recommendedName>
    <alternativeName>
        <fullName evidence="2">30S ribosomal protein S11</fullName>
    </alternativeName>
</protein>
<name>RS11_LEPCP</name>